<accession>Q57914</accession>
<proteinExistence type="predicted"/>
<reference key="1">
    <citation type="journal article" date="1996" name="Science">
        <title>Complete genome sequence of the methanogenic archaeon, Methanococcus jannaschii.</title>
        <authorList>
            <person name="Bult C.J."/>
            <person name="White O."/>
            <person name="Olsen G.J."/>
            <person name="Zhou L."/>
            <person name="Fleischmann R.D."/>
            <person name="Sutton G.G."/>
            <person name="Blake J.A."/>
            <person name="FitzGerald L.M."/>
            <person name="Clayton R.A."/>
            <person name="Gocayne J.D."/>
            <person name="Kerlavage A.R."/>
            <person name="Dougherty B.A."/>
            <person name="Tomb J.-F."/>
            <person name="Adams M.D."/>
            <person name="Reich C.I."/>
            <person name="Overbeek R."/>
            <person name="Kirkness E.F."/>
            <person name="Weinstock K.G."/>
            <person name="Merrick J.M."/>
            <person name="Glodek A."/>
            <person name="Scott J.L."/>
            <person name="Geoghagen N.S.M."/>
            <person name="Weidman J.F."/>
            <person name="Fuhrmann J.L."/>
            <person name="Nguyen D."/>
            <person name="Utterback T.R."/>
            <person name="Kelley J.M."/>
            <person name="Peterson J.D."/>
            <person name="Sadow P.W."/>
            <person name="Hanna M.C."/>
            <person name="Cotton M.D."/>
            <person name="Roberts K.M."/>
            <person name="Hurst M.A."/>
            <person name="Kaine B.P."/>
            <person name="Borodovsky M."/>
            <person name="Klenk H.-P."/>
            <person name="Fraser C.M."/>
            <person name="Smith H.O."/>
            <person name="Woese C.R."/>
            <person name="Venter J.C."/>
        </authorList>
    </citation>
    <scope>NUCLEOTIDE SEQUENCE [LARGE SCALE GENOMIC DNA]</scope>
    <source>
        <strain>ATCC 43067 / DSM 2661 / JAL-1 / JCM 10045 / NBRC 100440</strain>
    </source>
</reference>
<feature type="chain" id="PRO_0000106896" description="Uncharacterized protein MJ0491">
    <location>
        <begin position="1"/>
        <end position="167"/>
    </location>
</feature>
<name>Y491_METJA</name>
<gene>
    <name type="ordered locus">MJ0491</name>
</gene>
<dbReference type="EMBL" id="L77117">
    <property type="protein sequence ID" value="AAB98482.1"/>
    <property type="molecule type" value="Genomic_DNA"/>
</dbReference>
<dbReference type="PIR" id="C64361">
    <property type="entry name" value="C64361"/>
</dbReference>
<dbReference type="FunCoup" id="Q57914">
    <property type="interactions" value="1"/>
</dbReference>
<dbReference type="STRING" id="243232.MJ_0491"/>
<dbReference type="PaxDb" id="243232-MJ_0491"/>
<dbReference type="EnsemblBacteria" id="AAB98482">
    <property type="protein sequence ID" value="AAB98482"/>
    <property type="gene ID" value="MJ_0491"/>
</dbReference>
<dbReference type="KEGG" id="mja:MJ_0491"/>
<dbReference type="eggNOG" id="arCOG04873">
    <property type="taxonomic scope" value="Archaea"/>
</dbReference>
<dbReference type="HOGENOM" id="CLU_143947_0_0_2"/>
<dbReference type="InParanoid" id="Q57914"/>
<dbReference type="Proteomes" id="UP000000805">
    <property type="component" value="Chromosome"/>
</dbReference>
<dbReference type="InterPro" id="IPR014515">
    <property type="entry name" value="UCP921964"/>
</dbReference>
<dbReference type="Pfam" id="PF09893">
    <property type="entry name" value="DUF2120"/>
    <property type="match status" value="1"/>
</dbReference>
<dbReference type="PIRSF" id="PIRSF021964">
    <property type="entry name" value="UCP921964"/>
    <property type="match status" value="1"/>
</dbReference>
<keyword id="KW-1185">Reference proteome</keyword>
<protein>
    <recommendedName>
        <fullName>Uncharacterized protein MJ0491</fullName>
    </recommendedName>
</protein>
<organism>
    <name type="scientific">Methanocaldococcus jannaschii (strain ATCC 43067 / DSM 2661 / JAL-1 / JCM 10045 / NBRC 100440)</name>
    <name type="common">Methanococcus jannaschii</name>
    <dbReference type="NCBI Taxonomy" id="243232"/>
    <lineage>
        <taxon>Archaea</taxon>
        <taxon>Methanobacteriati</taxon>
        <taxon>Methanobacteriota</taxon>
        <taxon>Methanomada group</taxon>
        <taxon>Methanococci</taxon>
        <taxon>Methanococcales</taxon>
        <taxon>Methanocaldococcaceae</taxon>
        <taxon>Methanocaldococcus</taxon>
    </lineage>
</organism>
<sequence>MHLENLLKSLKNTVKKLKTYNFGVSMWKVNIGRLMHALNAFKGSKPLFETDEMLMVKGVCRDEEVEKYGSIKDYLVKKLEKEGFEIVEDIKEIDKFVSRINEILKENPLYPDTFGFERMKESFEMIGCECDYVIAKKRNIMVGVCMYFDKKMKNPKFVEVVGVLLPS</sequence>